<accession>Q1QUI7</accession>
<comment type="function">
    <text evidence="1">Nucleotide-binding protein.</text>
</comment>
<comment type="similarity">
    <text evidence="1">Belongs to the YajQ family.</text>
</comment>
<reference key="1">
    <citation type="journal article" date="2011" name="Stand. Genomic Sci.">
        <title>Complete genome sequence of the halophilic and highly halotolerant Chromohalobacter salexigens type strain (1H11(T)).</title>
        <authorList>
            <person name="Copeland A."/>
            <person name="O'Connor K."/>
            <person name="Lucas S."/>
            <person name="Lapidus A."/>
            <person name="Berry K.W."/>
            <person name="Detter J.C."/>
            <person name="Del Rio T.G."/>
            <person name="Hammon N."/>
            <person name="Dalin E."/>
            <person name="Tice H."/>
            <person name="Pitluck S."/>
            <person name="Bruce D."/>
            <person name="Goodwin L."/>
            <person name="Han C."/>
            <person name="Tapia R."/>
            <person name="Saunders E."/>
            <person name="Schmutz J."/>
            <person name="Brettin T."/>
            <person name="Larimer F."/>
            <person name="Land M."/>
            <person name="Hauser L."/>
            <person name="Vargas C."/>
            <person name="Nieto J.J."/>
            <person name="Kyrpides N.C."/>
            <person name="Ivanova N."/>
            <person name="Goker M."/>
            <person name="Klenk H.P."/>
            <person name="Csonka L.N."/>
            <person name="Woyke T."/>
        </authorList>
    </citation>
    <scope>NUCLEOTIDE SEQUENCE [LARGE SCALE GENOMIC DNA]</scope>
    <source>
        <strain>ATCC BAA-138 / DSM 3043 / CIP 106854 / NCIMB 13768 / 1H11</strain>
    </source>
</reference>
<evidence type="ECO:0000255" key="1">
    <source>
        <dbReference type="HAMAP-Rule" id="MF_00632"/>
    </source>
</evidence>
<gene>
    <name type="ordered locus">Csal_2524</name>
</gene>
<feature type="chain" id="PRO_0000261929" description="Nucleotide-binding protein Csal_2524">
    <location>
        <begin position="1"/>
        <end position="161"/>
    </location>
</feature>
<keyword id="KW-0547">Nucleotide-binding</keyword>
<keyword id="KW-1185">Reference proteome</keyword>
<sequence length="161" mass="18186">MPSFDIVSEFDKHEASNAVDQANREIQTRFDFRGVTASFTLEGETVTLEAEVDFQLKQMLDVLRNKLIARGIDARCMDIKEPVTSGVRAHQEVVLKQGLEQPECKDIVKRLKEAKLKVQAQIQGDKVRVTGKKRDELQQAIALLKSDAGPELALQYTNFRD</sequence>
<proteinExistence type="inferred from homology"/>
<protein>
    <recommendedName>
        <fullName evidence="1">Nucleotide-binding protein Csal_2524</fullName>
    </recommendedName>
</protein>
<dbReference type="EMBL" id="CP000285">
    <property type="protein sequence ID" value="ABE59871.1"/>
    <property type="molecule type" value="Genomic_DNA"/>
</dbReference>
<dbReference type="RefSeq" id="WP_011507817.1">
    <property type="nucleotide sequence ID" value="NC_007963.1"/>
</dbReference>
<dbReference type="SMR" id="Q1QUI7"/>
<dbReference type="STRING" id="290398.Csal_2524"/>
<dbReference type="GeneID" id="95335228"/>
<dbReference type="KEGG" id="csa:Csal_2524"/>
<dbReference type="eggNOG" id="COG1666">
    <property type="taxonomic scope" value="Bacteria"/>
</dbReference>
<dbReference type="HOGENOM" id="CLU_099839_1_0_6"/>
<dbReference type="OrthoDB" id="9801447at2"/>
<dbReference type="Proteomes" id="UP000000239">
    <property type="component" value="Chromosome"/>
</dbReference>
<dbReference type="GO" id="GO:0005829">
    <property type="term" value="C:cytosol"/>
    <property type="evidence" value="ECO:0007669"/>
    <property type="project" value="TreeGrafter"/>
</dbReference>
<dbReference type="GO" id="GO:0000166">
    <property type="term" value="F:nucleotide binding"/>
    <property type="evidence" value="ECO:0007669"/>
    <property type="project" value="TreeGrafter"/>
</dbReference>
<dbReference type="CDD" id="cd11740">
    <property type="entry name" value="YajQ_like"/>
    <property type="match status" value="1"/>
</dbReference>
<dbReference type="Gene3D" id="3.30.70.860">
    <property type="match status" value="1"/>
</dbReference>
<dbReference type="Gene3D" id="3.30.70.990">
    <property type="entry name" value="YajQ-like, domain 2"/>
    <property type="match status" value="1"/>
</dbReference>
<dbReference type="HAMAP" id="MF_00632">
    <property type="entry name" value="YajQ"/>
    <property type="match status" value="1"/>
</dbReference>
<dbReference type="InterPro" id="IPR007551">
    <property type="entry name" value="DUF520"/>
</dbReference>
<dbReference type="InterPro" id="IPR035571">
    <property type="entry name" value="UPF0234-like_C"/>
</dbReference>
<dbReference type="InterPro" id="IPR035570">
    <property type="entry name" value="UPF0234_N"/>
</dbReference>
<dbReference type="InterPro" id="IPR036183">
    <property type="entry name" value="YajQ-like_sf"/>
</dbReference>
<dbReference type="NCBIfam" id="NF003819">
    <property type="entry name" value="PRK05412.1"/>
    <property type="match status" value="1"/>
</dbReference>
<dbReference type="PANTHER" id="PTHR30476">
    <property type="entry name" value="UPF0234 PROTEIN YAJQ"/>
    <property type="match status" value="1"/>
</dbReference>
<dbReference type="PANTHER" id="PTHR30476:SF0">
    <property type="entry name" value="UPF0234 PROTEIN YAJQ"/>
    <property type="match status" value="1"/>
</dbReference>
<dbReference type="Pfam" id="PF04461">
    <property type="entry name" value="DUF520"/>
    <property type="match status" value="1"/>
</dbReference>
<dbReference type="SUPFAM" id="SSF89963">
    <property type="entry name" value="YajQ-like"/>
    <property type="match status" value="2"/>
</dbReference>
<name>Y2524_CHRSD</name>
<organism>
    <name type="scientific">Chromohalobacter salexigens (strain ATCC BAA-138 / DSM 3043 / CIP 106854 / NCIMB 13768 / 1H11)</name>
    <dbReference type="NCBI Taxonomy" id="290398"/>
    <lineage>
        <taxon>Bacteria</taxon>
        <taxon>Pseudomonadati</taxon>
        <taxon>Pseudomonadota</taxon>
        <taxon>Gammaproteobacteria</taxon>
        <taxon>Oceanospirillales</taxon>
        <taxon>Halomonadaceae</taxon>
        <taxon>Chromohalobacter</taxon>
    </lineage>
</organism>